<comment type="function">
    <text evidence="1">Plasma membrane-associated small GTPase which cycles between an active GTP-bound and an inactive GDP-bound state. Causes the formation of thin, actin-rich surface projections called filopodia. Functions cooperatively with CDC42 and Rac to generate additional structures, increasing the diversity of actin-based morphology (By similarity).</text>
</comment>
<comment type="subcellular location">
    <subcellularLocation>
        <location evidence="4">Cell membrane</location>
        <topology evidence="4">Lipid-anchor</topology>
        <orientation evidence="4">Cytoplasmic side</orientation>
    </subcellularLocation>
    <subcellularLocation>
        <location evidence="1">Cytoplasm</location>
        <location evidence="1">Cytoskeleton</location>
    </subcellularLocation>
</comment>
<comment type="similarity">
    <text evidence="4">Belongs to the small GTPase superfamily. Rho family.</text>
</comment>
<keyword id="KW-0007">Acetylation</keyword>
<keyword id="KW-1003">Cell membrane</keyword>
<keyword id="KW-0963">Cytoplasm</keyword>
<keyword id="KW-0206">Cytoskeleton</keyword>
<keyword id="KW-0342">GTP-binding</keyword>
<keyword id="KW-0449">Lipoprotein</keyword>
<keyword id="KW-0472">Membrane</keyword>
<keyword id="KW-0488">Methylation</keyword>
<keyword id="KW-0547">Nucleotide-binding</keyword>
<keyword id="KW-0636">Prenylation</keyword>
<keyword id="KW-1185">Reference proteome</keyword>
<evidence type="ECO:0000250" key="1"/>
<evidence type="ECO:0000250" key="2">
    <source>
        <dbReference type="UniProtKB" id="Q9HBH0"/>
    </source>
</evidence>
<evidence type="ECO:0000255" key="3"/>
<evidence type="ECO:0000305" key="4"/>
<feature type="chain" id="PRO_0000284912" description="Rho-related GTP-binding protein RhoF">
    <location>
        <begin position="1"/>
        <end position="212"/>
    </location>
</feature>
<feature type="propeptide" id="PRO_0000284913" description="Removed in mature form" evidence="3">
    <location>
        <begin position="213"/>
        <end position="215"/>
    </location>
</feature>
<feature type="short sequence motif" description="Effector region" evidence="3">
    <location>
        <begin position="52"/>
        <end position="60"/>
    </location>
</feature>
<feature type="binding site" evidence="1">
    <location>
        <begin position="30"/>
        <end position="37"/>
    </location>
    <ligand>
        <name>GTP</name>
        <dbReference type="ChEBI" id="CHEBI:37565"/>
    </ligand>
</feature>
<feature type="binding site" evidence="1">
    <location>
        <begin position="77"/>
        <end position="81"/>
    </location>
    <ligand>
        <name>GTP</name>
        <dbReference type="ChEBI" id="CHEBI:37565"/>
    </ligand>
</feature>
<feature type="binding site" evidence="1">
    <location>
        <begin position="135"/>
        <end position="138"/>
    </location>
    <ligand>
        <name>GTP</name>
        <dbReference type="ChEBI" id="CHEBI:37565"/>
    </ligand>
</feature>
<feature type="modified residue" description="N-acetylmethionine" evidence="2">
    <location>
        <position position="1"/>
    </location>
</feature>
<feature type="modified residue" description="Cysteine methyl ester" evidence="3">
    <location>
        <position position="212"/>
    </location>
</feature>
<feature type="lipid moiety-binding region" description="S-geranylgeranyl cysteine" evidence="3">
    <location>
        <position position="212"/>
    </location>
</feature>
<gene>
    <name type="primary">RHOF</name>
</gene>
<accession>Q3SZA1</accession>
<name>RHOF_BOVIN</name>
<reference key="1">
    <citation type="submission" date="2005-08" db="EMBL/GenBank/DDBJ databases">
        <authorList>
            <consortium name="NIH - Mammalian Gene Collection (MGC) project"/>
        </authorList>
    </citation>
    <scope>NUCLEOTIDE SEQUENCE [LARGE SCALE MRNA]</scope>
    <source>
        <strain>Crossbred X Angus</strain>
        <tissue>Ileum</tissue>
    </source>
</reference>
<protein>
    <recommendedName>
        <fullName>Rho-related GTP-binding protein RhoF</fullName>
    </recommendedName>
</protein>
<sequence length="215" mass="23841">MDAAGAPAPAPAPPAAPGSGRKELKIVIVGDGGCGKTSLLMVYSQGSFPEHYAPSVFEKYTASVTVGSKEVTLNLYDTAGQEDYDRLRPLSYQNTHLVLICYDVMNPTSYDNVLIKWFPEVTHFCRGIPMVLIGCKTDLRKDKEQLRKLRAAQLEPITYTQGQSACEQIRAALYLECSAKFRENVEDVFREAAKVALSALKKAQRQKQHRLCLLL</sequence>
<organism>
    <name type="scientific">Bos taurus</name>
    <name type="common">Bovine</name>
    <dbReference type="NCBI Taxonomy" id="9913"/>
    <lineage>
        <taxon>Eukaryota</taxon>
        <taxon>Metazoa</taxon>
        <taxon>Chordata</taxon>
        <taxon>Craniata</taxon>
        <taxon>Vertebrata</taxon>
        <taxon>Euteleostomi</taxon>
        <taxon>Mammalia</taxon>
        <taxon>Eutheria</taxon>
        <taxon>Laurasiatheria</taxon>
        <taxon>Artiodactyla</taxon>
        <taxon>Ruminantia</taxon>
        <taxon>Pecora</taxon>
        <taxon>Bovidae</taxon>
        <taxon>Bovinae</taxon>
        <taxon>Bos</taxon>
    </lineage>
</organism>
<dbReference type="EMBL" id="BC103016">
    <property type="protein sequence ID" value="AAI03017.1"/>
    <property type="molecule type" value="mRNA"/>
</dbReference>
<dbReference type="RefSeq" id="NP_001035692.1">
    <property type="nucleotide sequence ID" value="NM_001040602.2"/>
</dbReference>
<dbReference type="RefSeq" id="XP_005217997.1">
    <property type="nucleotide sequence ID" value="XM_005217940.3"/>
</dbReference>
<dbReference type="RefSeq" id="XP_005217998.1">
    <property type="nucleotide sequence ID" value="XM_005217941.3"/>
</dbReference>
<dbReference type="RefSeq" id="XP_005218000.1">
    <property type="nucleotide sequence ID" value="XM_005217943.3"/>
</dbReference>
<dbReference type="RefSeq" id="XP_005218002.1">
    <property type="nucleotide sequence ID" value="XM_005217945.3"/>
</dbReference>
<dbReference type="RefSeq" id="XP_005218004.1">
    <property type="nucleotide sequence ID" value="XM_005217947.3"/>
</dbReference>
<dbReference type="RefSeq" id="XP_005218006.1">
    <property type="nucleotide sequence ID" value="XM_005217949.3"/>
</dbReference>
<dbReference type="RefSeq" id="XP_010812283.1">
    <property type="nucleotide sequence ID" value="XM_010813981.2"/>
</dbReference>
<dbReference type="RefSeq" id="XP_010812284.1">
    <property type="nucleotide sequence ID" value="XM_010813982.2"/>
</dbReference>
<dbReference type="SMR" id="Q3SZA1"/>
<dbReference type="FunCoup" id="Q3SZA1">
    <property type="interactions" value="953"/>
</dbReference>
<dbReference type="STRING" id="9913.ENSBTAP00000043485"/>
<dbReference type="PaxDb" id="9913-ENSBTAP00000043485"/>
<dbReference type="Ensembl" id="ENSBTAT00000046161.4">
    <property type="protein sequence ID" value="ENSBTAP00000043485.3"/>
    <property type="gene ID" value="ENSBTAG00000032534.5"/>
</dbReference>
<dbReference type="GeneID" id="617894"/>
<dbReference type="KEGG" id="bta:617894"/>
<dbReference type="CTD" id="54509"/>
<dbReference type="VEuPathDB" id="HostDB:ENSBTAG00000032534"/>
<dbReference type="VGNC" id="VGNC:33948">
    <property type="gene designation" value="RHOF"/>
</dbReference>
<dbReference type="eggNOG" id="KOG0393">
    <property type="taxonomic scope" value="Eukaryota"/>
</dbReference>
<dbReference type="GeneTree" id="ENSGT00940000158903"/>
<dbReference type="HOGENOM" id="CLU_041217_21_2_1"/>
<dbReference type="InParanoid" id="Q3SZA1"/>
<dbReference type="OMA" id="CSAKHQE"/>
<dbReference type="OrthoDB" id="8830751at2759"/>
<dbReference type="TreeFam" id="TF331746"/>
<dbReference type="Reactome" id="R-BTA-6798695">
    <property type="pathway name" value="Neutrophil degranulation"/>
</dbReference>
<dbReference type="Reactome" id="R-BTA-9035034">
    <property type="pathway name" value="RHOF GTPase cycle"/>
</dbReference>
<dbReference type="Proteomes" id="UP000009136">
    <property type="component" value="Chromosome 17"/>
</dbReference>
<dbReference type="Bgee" id="ENSBTAG00000032534">
    <property type="expression patterns" value="Expressed in mesenteric lymph node and 105 other cell types or tissues"/>
</dbReference>
<dbReference type="GO" id="GO:0005856">
    <property type="term" value="C:cytoskeleton"/>
    <property type="evidence" value="ECO:0007669"/>
    <property type="project" value="UniProtKB-SubCell"/>
</dbReference>
<dbReference type="GO" id="GO:0005829">
    <property type="term" value="C:cytosol"/>
    <property type="evidence" value="ECO:0000318"/>
    <property type="project" value="GO_Central"/>
</dbReference>
<dbReference type="GO" id="GO:0005886">
    <property type="term" value="C:plasma membrane"/>
    <property type="evidence" value="ECO:0000318"/>
    <property type="project" value="GO_Central"/>
</dbReference>
<dbReference type="GO" id="GO:0005525">
    <property type="term" value="F:GTP binding"/>
    <property type="evidence" value="ECO:0000318"/>
    <property type="project" value="GO_Central"/>
</dbReference>
<dbReference type="GO" id="GO:0003924">
    <property type="term" value="F:GTPase activity"/>
    <property type="evidence" value="ECO:0000318"/>
    <property type="project" value="GO_Central"/>
</dbReference>
<dbReference type="GO" id="GO:0019901">
    <property type="term" value="F:protein kinase binding"/>
    <property type="evidence" value="ECO:0000318"/>
    <property type="project" value="GO_Central"/>
</dbReference>
<dbReference type="GO" id="GO:0007015">
    <property type="term" value="P:actin filament organization"/>
    <property type="evidence" value="ECO:0000318"/>
    <property type="project" value="GO_Central"/>
</dbReference>
<dbReference type="GO" id="GO:0016477">
    <property type="term" value="P:cell migration"/>
    <property type="evidence" value="ECO:0000318"/>
    <property type="project" value="GO_Central"/>
</dbReference>
<dbReference type="GO" id="GO:0032956">
    <property type="term" value="P:regulation of actin cytoskeleton organization"/>
    <property type="evidence" value="ECO:0000318"/>
    <property type="project" value="GO_Central"/>
</dbReference>
<dbReference type="GO" id="GO:0007165">
    <property type="term" value="P:signal transduction"/>
    <property type="evidence" value="ECO:0000318"/>
    <property type="project" value="GO_Central"/>
</dbReference>
<dbReference type="GO" id="GO:0007264">
    <property type="term" value="P:small GTPase-mediated signal transduction"/>
    <property type="evidence" value="ECO:0007669"/>
    <property type="project" value="InterPro"/>
</dbReference>
<dbReference type="CDD" id="cd04132">
    <property type="entry name" value="Rho4_like"/>
    <property type="match status" value="1"/>
</dbReference>
<dbReference type="FunFam" id="3.40.50.300:FF:000676">
    <property type="entry name" value="Ras homolog family member F"/>
    <property type="match status" value="1"/>
</dbReference>
<dbReference type="Gene3D" id="3.40.50.300">
    <property type="entry name" value="P-loop containing nucleotide triphosphate hydrolases"/>
    <property type="match status" value="1"/>
</dbReference>
<dbReference type="InterPro" id="IPR027417">
    <property type="entry name" value="P-loop_NTPase"/>
</dbReference>
<dbReference type="InterPro" id="IPR005225">
    <property type="entry name" value="Small_GTP-bd"/>
</dbReference>
<dbReference type="InterPro" id="IPR001806">
    <property type="entry name" value="Small_GTPase"/>
</dbReference>
<dbReference type="InterPro" id="IPR003578">
    <property type="entry name" value="Small_GTPase_Rho"/>
</dbReference>
<dbReference type="NCBIfam" id="TIGR00231">
    <property type="entry name" value="small_GTP"/>
    <property type="match status" value="1"/>
</dbReference>
<dbReference type="PANTHER" id="PTHR24072">
    <property type="entry name" value="RHO FAMILY GTPASE"/>
    <property type="match status" value="1"/>
</dbReference>
<dbReference type="Pfam" id="PF00071">
    <property type="entry name" value="Ras"/>
    <property type="match status" value="1"/>
</dbReference>
<dbReference type="PRINTS" id="PR00449">
    <property type="entry name" value="RASTRNSFRMNG"/>
</dbReference>
<dbReference type="SMART" id="SM00175">
    <property type="entry name" value="RAB"/>
    <property type="match status" value="1"/>
</dbReference>
<dbReference type="SMART" id="SM00176">
    <property type="entry name" value="RAN"/>
    <property type="match status" value="1"/>
</dbReference>
<dbReference type="SMART" id="SM00173">
    <property type="entry name" value="RAS"/>
    <property type="match status" value="1"/>
</dbReference>
<dbReference type="SMART" id="SM00174">
    <property type="entry name" value="RHO"/>
    <property type="match status" value="1"/>
</dbReference>
<dbReference type="SUPFAM" id="SSF52540">
    <property type="entry name" value="P-loop containing nucleoside triphosphate hydrolases"/>
    <property type="match status" value="1"/>
</dbReference>
<dbReference type="PROSITE" id="PS51420">
    <property type="entry name" value="RHO"/>
    <property type="match status" value="1"/>
</dbReference>
<proteinExistence type="evidence at transcript level"/>